<protein>
    <recommendedName>
        <fullName evidence="1">Ribonuclease H</fullName>
        <shortName evidence="1">RNase H</shortName>
        <ecNumber evidence="1">3.1.26.4</ecNumber>
    </recommendedName>
</protein>
<name>RNH_CHESB</name>
<comment type="function">
    <text evidence="1">Endonuclease that specifically degrades the RNA of RNA-DNA hybrids.</text>
</comment>
<comment type="catalytic activity">
    <reaction evidence="1">
        <text>Endonucleolytic cleavage to 5'-phosphomonoester.</text>
        <dbReference type="EC" id="3.1.26.4"/>
    </reaction>
</comment>
<comment type="cofactor">
    <cofactor evidence="1">
        <name>Mg(2+)</name>
        <dbReference type="ChEBI" id="CHEBI:18420"/>
    </cofactor>
    <text evidence="1">Binds 1 Mg(2+) ion per subunit. May bind a second metal ion at a regulatory site, or after substrate binding.</text>
</comment>
<comment type="subunit">
    <text evidence="1">Monomer.</text>
</comment>
<comment type="subcellular location">
    <subcellularLocation>
        <location evidence="1">Cytoplasm</location>
    </subcellularLocation>
</comment>
<comment type="similarity">
    <text evidence="1">Belongs to the RNase H family.</text>
</comment>
<organism>
    <name type="scientific">Chelativorans sp. (strain BNC1)</name>
    <dbReference type="NCBI Taxonomy" id="266779"/>
    <lineage>
        <taxon>Bacteria</taxon>
        <taxon>Pseudomonadati</taxon>
        <taxon>Pseudomonadota</taxon>
        <taxon>Alphaproteobacteria</taxon>
        <taxon>Hyphomicrobiales</taxon>
        <taxon>Phyllobacteriaceae</taxon>
        <taxon>Chelativorans</taxon>
    </lineage>
</organism>
<evidence type="ECO:0000255" key="1">
    <source>
        <dbReference type="HAMAP-Rule" id="MF_00042"/>
    </source>
</evidence>
<evidence type="ECO:0000255" key="2">
    <source>
        <dbReference type="PROSITE-ProRule" id="PRU00408"/>
    </source>
</evidence>
<evidence type="ECO:0000256" key="3">
    <source>
        <dbReference type="SAM" id="MobiDB-lite"/>
    </source>
</evidence>
<accession>Q11KC5</accession>
<dbReference type="EC" id="3.1.26.4" evidence="1"/>
<dbReference type="EMBL" id="CP000390">
    <property type="protein sequence ID" value="ABG62150.1"/>
    <property type="molecule type" value="Genomic_DNA"/>
</dbReference>
<dbReference type="SMR" id="Q11KC5"/>
<dbReference type="STRING" id="266779.Meso_0750"/>
<dbReference type="KEGG" id="mes:Meso_0750"/>
<dbReference type="eggNOG" id="COG0328">
    <property type="taxonomic scope" value="Bacteria"/>
</dbReference>
<dbReference type="HOGENOM" id="CLU_030894_6_2_5"/>
<dbReference type="OrthoDB" id="7845843at2"/>
<dbReference type="GO" id="GO:0005737">
    <property type="term" value="C:cytoplasm"/>
    <property type="evidence" value="ECO:0007669"/>
    <property type="project" value="UniProtKB-SubCell"/>
</dbReference>
<dbReference type="GO" id="GO:0000287">
    <property type="term" value="F:magnesium ion binding"/>
    <property type="evidence" value="ECO:0007669"/>
    <property type="project" value="UniProtKB-UniRule"/>
</dbReference>
<dbReference type="GO" id="GO:0003676">
    <property type="term" value="F:nucleic acid binding"/>
    <property type="evidence" value="ECO:0007669"/>
    <property type="project" value="InterPro"/>
</dbReference>
<dbReference type="GO" id="GO:0004523">
    <property type="term" value="F:RNA-DNA hybrid ribonuclease activity"/>
    <property type="evidence" value="ECO:0007669"/>
    <property type="project" value="UniProtKB-UniRule"/>
</dbReference>
<dbReference type="GO" id="GO:0043137">
    <property type="term" value="P:DNA replication, removal of RNA primer"/>
    <property type="evidence" value="ECO:0007669"/>
    <property type="project" value="TreeGrafter"/>
</dbReference>
<dbReference type="CDD" id="cd09278">
    <property type="entry name" value="RNase_HI_prokaryote_like"/>
    <property type="match status" value="1"/>
</dbReference>
<dbReference type="FunFam" id="3.30.420.10:FF:000008">
    <property type="entry name" value="Ribonuclease H"/>
    <property type="match status" value="1"/>
</dbReference>
<dbReference type="Gene3D" id="3.30.420.10">
    <property type="entry name" value="Ribonuclease H-like superfamily/Ribonuclease H"/>
    <property type="match status" value="1"/>
</dbReference>
<dbReference type="HAMAP" id="MF_00042">
    <property type="entry name" value="RNase_H"/>
    <property type="match status" value="1"/>
</dbReference>
<dbReference type="InterPro" id="IPR050092">
    <property type="entry name" value="RNase_H"/>
</dbReference>
<dbReference type="InterPro" id="IPR012337">
    <property type="entry name" value="RNaseH-like_sf"/>
</dbReference>
<dbReference type="InterPro" id="IPR002156">
    <property type="entry name" value="RNaseH_domain"/>
</dbReference>
<dbReference type="InterPro" id="IPR036397">
    <property type="entry name" value="RNaseH_sf"/>
</dbReference>
<dbReference type="InterPro" id="IPR022892">
    <property type="entry name" value="RNaseHI"/>
</dbReference>
<dbReference type="NCBIfam" id="NF001236">
    <property type="entry name" value="PRK00203.1"/>
    <property type="match status" value="1"/>
</dbReference>
<dbReference type="PANTHER" id="PTHR10642">
    <property type="entry name" value="RIBONUCLEASE H1"/>
    <property type="match status" value="1"/>
</dbReference>
<dbReference type="PANTHER" id="PTHR10642:SF26">
    <property type="entry name" value="RIBONUCLEASE H1"/>
    <property type="match status" value="1"/>
</dbReference>
<dbReference type="Pfam" id="PF00075">
    <property type="entry name" value="RNase_H"/>
    <property type="match status" value="1"/>
</dbReference>
<dbReference type="SUPFAM" id="SSF53098">
    <property type="entry name" value="Ribonuclease H-like"/>
    <property type="match status" value="1"/>
</dbReference>
<dbReference type="PROSITE" id="PS50879">
    <property type="entry name" value="RNASE_H_1"/>
    <property type="match status" value="1"/>
</dbReference>
<feature type="chain" id="PRO_0000332626" description="Ribonuclease H">
    <location>
        <begin position="1"/>
        <end position="162"/>
    </location>
</feature>
<feature type="domain" description="RNase H type-1" evidence="2">
    <location>
        <begin position="1"/>
        <end position="141"/>
    </location>
</feature>
<feature type="region of interest" description="Disordered" evidence="3">
    <location>
        <begin position="139"/>
        <end position="162"/>
    </location>
</feature>
<feature type="binding site" evidence="1">
    <location>
        <position position="9"/>
    </location>
    <ligand>
        <name>Mg(2+)</name>
        <dbReference type="ChEBI" id="CHEBI:18420"/>
        <label>1</label>
    </ligand>
</feature>
<feature type="binding site" evidence="1">
    <location>
        <position position="9"/>
    </location>
    <ligand>
        <name>Mg(2+)</name>
        <dbReference type="ChEBI" id="CHEBI:18420"/>
        <label>2</label>
    </ligand>
</feature>
<feature type="binding site" evidence="1">
    <location>
        <position position="47"/>
    </location>
    <ligand>
        <name>Mg(2+)</name>
        <dbReference type="ChEBI" id="CHEBI:18420"/>
        <label>1</label>
    </ligand>
</feature>
<feature type="binding site" evidence="1">
    <location>
        <position position="69"/>
    </location>
    <ligand>
        <name>Mg(2+)</name>
        <dbReference type="ChEBI" id="CHEBI:18420"/>
        <label>1</label>
    </ligand>
</feature>
<feature type="binding site" evidence="1">
    <location>
        <position position="133"/>
    </location>
    <ligand>
        <name>Mg(2+)</name>
        <dbReference type="ChEBI" id="CHEBI:18420"/>
        <label>2</label>
    </ligand>
</feature>
<proteinExistence type="inferred from homology"/>
<gene>
    <name evidence="1" type="primary">rnhA</name>
    <name type="ordered locus">Meso_0750</name>
</gene>
<reference key="1">
    <citation type="submission" date="2006-06" db="EMBL/GenBank/DDBJ databases">
        <title>Complete sequence of chromosome of Mesorhizobium sp. BNC1.</title>
        <authorList>
            <consortium name="US DOE Joint Genome Institute"/>
            <person name="Copeland A."/>
            <person name="Lucas S."/>
            <person name="Lapidus A."/>
            <person name="Barry K."/>
            <person name="Detter J.C."/>
            <person name="Glavina del Rio T."/>
            <person name="Hammon N."/>
            <person name="Israni S."/>
            <person name="Dalin E."/>
            <person name="Tice H."/>
            <person name="Pitluck S."/>
            <person name="Chertkov O."/>
            <person name="Brettin T."/>
            <person name="Bruce D."/>
            <person name="Han C."/>
            <person name="Tapia R."/>
            <person name="Gilna P."/>
            <person name="Schmutz J."/>
            <person name="Larimer F."/>
            <person name="Land M."/>
            <person name="Hauser L."/>
            <person name="Kyrpides N."/>
            <person name="Mikhailova N."/>
            <person name="Richardson P."/>
        </authorList>
    </citation>
    <scope>NUCLEOTIDE SEQUENCE [LARGE SCALE GENOMIC DNA]</scope>
    <source>
        <strain>BNC1</strain>
    </source>
</reference>
<keyword id="KW-0963">Cytoplasm</keyword>
<keyword id="KW-0255">Endonuclease</keyword>
<keyword id="KW-0378">Hydrolase</keyword>
<keyword id="KW-0460">Magnesium</keyword>
<keyword id="KW-0479">Metal-binding</keyword>
<keyword id="KW-0540">Nuclease</keyword>
<sequence>MKRIEIFTDGACSGNPGPGGWGAILRYNGTEKELYGGEADTTNNRMELTAAIEALEALKEPCEVDLHTDSNYLRDGISGWIEGWKRNGWRTADRKPVKNAELWQALDEARRRHKVHWHWVRGHAGHPENERADALARAGMAPFKKKKGGDTASSEEGSARRR</sequence>